<feature type="chain" id="PRO_0000364889" description="Ferredoxin--NADP reductase 2">
    <location>
        <begin position="1"/>
        <end position="328"/>
    </location>
</feature>
<feature type="binding site" evidence="1">
    <location>
        <position position="16"/>
    </location>
    <ligand>
        <name>FAD</name>
        <dbReference type="ChEBI" id="CHEBI:57692"/>
    </ligand>
</feature>
<feature type="binding site" evidence="1">
    <location>
        <position position="35"/>
    </location>
    <ligand>
        <name>FAD</name>
        <dbReference type="ChEBI" id="CHEBI:57692"/>
    </ligand>
</feature>
<feature type="binding site" evidence="1">
    <location>
        <position position="43"/>
    </location>
    <ligand>
        <name>FAD</name>
        <dbReference type="ChEBI" id="CHEBI:57692"/>
    </ligand>
</feature>
<feature type="binding site" evidence="1">
    <location>
        <position position="48"/>
    </location>
    <ligand>
        <name>FAD</name>
        <dbReference type="ChEBI" id="CHEBI:57692"/>
    </ligand>
</feature>
<feature type="binding site" evidence="1">
    <location>
        <position position="88"/>
    </location>
    <ligand>
        <name>FAD</name>
        <dbReference type="ChEBI" id="CHEBI:57692"/>
    </ligand>
</feature>
<feature type="binding site" evidence="1">
    <location>
        <position position="123"/>
    </location>
    <ligand>
        <name>FAD</name>
        <dbReference type="ChEBI" id="CHEBI:57692"/>
    </ligand>
</feature>
<feature type="binding site" evidence="1">
    <location>
        <position position="284"/>
    </location>
    <ligand>
        <name>FAD</name>
        <dbReference type="ChEBI" id="CHEBI:57692"/>
    </ligand>
</feature>
<feature type="binding site" evidence="1">
    <location>
        <position position="325"/>
    </location>
    <ligand>
        <name>FAD</name>
        <dbReference type="ChEBI" id="CHEBI:57692"/>
    </ligand>
</feature>
<sequence>MDSKVFDVTIIGAGPTGLFTAFYGGMREASVKIIESLPHIGGQLTALYPEKYIYDIAGFPKVHAQELIDRLEEQAKFFDPEIVLGQAIDKVERLEDETIRLTSNTGEVHLTKTIIITAGNGAFQPRRLNIGNSEAFEGKNLHYYVRDMNQYKGKRVVLLGGGDSAVDWALMLEKIAAKVTLVHRRDQFRAHEHSVNQLKESSVEILTPYAPINVEASDKIEKIQLQEVKGEKIIDVEVDDIICNYGFISSLGPIKDWGLEIEKNSIVVNSKMETNIPGVYAAGDVCTYDGKVKLIATGFGEGPTAINNAKNYIDPKARIQPKHSTAMF</sequence>
<dbReference type="EC" id="1.18.1.2" evidence="1"/>
<dbReference type="EMBL" id="BA000028">
    <property type="protein sequence ID" value="BAC14307.1"/>
    <property type="molecule type" value="Genomic_DNA"/>
</dbReference>
<dbReference type="RefSeq" id="WP_011066743.1">
    <property type="nucleotide sequence ID" value="NC_004193.1"/>
</dbReference>
<dbReference type="SMR" id="Q8ENX4"/>
<dbReference type="STRING" id="221109.gene:10734602"/>
<dbReference type="KEGG" id="oih:OB2351"/>
<dbReference type="eggNOG" id="COG0492">
    <property type="taxonomic scope" value="Bacteria"/>
</dbReference>
<dbReference type="HOGENOM" id="CLU_031864_5_5_9"/>
<dbReference type="OrthoDB" id="9806179at2"/>
<dbReference type="PhylomeDB" id="Q8ENX4"/>
<dbReference type="Proteomes" id="UP000000822">
    <property type="component" value="Chromosome"/>
</dbReference>
<dbReference type="GO" id="GO:0004324">
    <property type="term" value="F:ferredoxin-NADP+ reductase activity"/>
    <property type="evidence" value="ECO:0007669"/>
    <property type="project" value="UniProtKB-UniRule"/>
</dbReference>
<dbReference type="GO" id="GO:0050660">
    <property type="term" value="F:flavin adenine dinucleotide binding"/>
    <property type="evidence" value="ECO:0007669"/>
    <property type="project" value="UniProtKB-UniRule"/>
</dbReference>
<dbReference type="GO" id="GO:0050661">
    <property type="term" value="F:NADP binding"/>
    <property type="evidence" value="ECO:0007669"/>
    <property type="project" value="UniProtKB-UniRule"/>
</dbReference>
<dbReference type="Gene3D" id="3.50.50.60">
    <property type="entry name" value="FAD/NAD(P)-binding domain"/>
    <property type="match status" value="2"/>
</dbReference>
<dbReference type="HAMAP" id="MF_01685">
    <property type="entry name" value="FENR2"/>
    <property type="match status" value="1"/>
</dbReference>
<dbReference type="InterPro" id="IPR036188">
    <property type="entry name" value="FAD/NAD-bd_sf"/>
</dbReference>
<dbReference type="InterPro" id="IPR023753">
    <property type="entry name" value="FAD/NAD-binding_dom"/>
</dbReference>
<dbReference type="InterPro" id="IPR022890">
    <property type="entry name" value="Fd--NADP_Rdtase_type_2"/>
</dbReference>
<dbReference type="InterPro" id="IPR050097">
    <property type="entry name" value="Ferredoxin-NADP_redctase_2"/>
</dbReference>
<dbReference type="PANTHER" id="PTHR48105">
    <property type="entry name" value="THIOREDOXIN REDUCTASE 1-RELATED-RELATED"/>
    <property type="match status" value="1"/>
</dbReference>
<dbReference type="Pfam" id="PF07992">
    <property type="entry name" value="Pyr_redox_2"/>
    <property type="match status" value="1"/>
</dbReference>
<dbReference type="PRINTS" id="PR00368">
    <property type="entry name" value="FADPNR"/>
</dbReference>
<dbReference type="PRINTS" id="PR00469">
    <property type="entry name" value="PNDRDTASEII"/>
</dbReference>
<dbReference type="SUPFAM" id="SSF51905">
    <property type="entry name" value="FAD/NAD(P)-binding domain"/>
    <property type="match status" value="1"/>
</dbReference>
<evidence type="ECO:0000255" key="1">
    <source>
        <dbReference type="HAMAP-Rule" id="MF_01685"/>
    </source>
</evidence>
<comment type="catalytic activity">
    <reaction evidence="1">
        <text>2 reduced [2Fe-2S]-[ferredoxin] + NADP(+) + H(+) = 2 oxidized [2Fe-2S]-[ferredoxin] + NADPH</text>
        <dbReference type="Rhea" id="RHEA:20125"/>
        <dbReference type="Rhea" id="RHEA-COMP:10000"/>
        <dbReference type="Rhea" id="RHEA-COMP:10001"/>
        <dbReference type="ChEBI" id="CHEBI:15378"/>
        <dbReference type="ChEBI" id="CHEBI:33737"/>
        <dbReference type="ChEBI" id="CHEBI:33738"/>
        <dbReference type="ChEBI" id="CHEBI:57783"/>
        <dbReference type="ChEBI" id="CHEBI:58349"/>
        <dbReference type="EC" id="1.18.1.2"/>
    </reaction>
</comment>
<comment type="cofactor">
    <cofactor evidence="1">
        <name>FAD</name>
        <dbReference type="ChEBI" id="CHEBI:57692"/>
    </cofactor>
    <text evidence="1">Binds 1 FAD per subunit.</text>
</comment>
<comment type="subunit">
    <text evidence="1">Homodimer.</text>
</comment>
<comment type="similarity">
    <text evidence="1">Belongs to the ferredoxin--NADP reductase type 2 family.</text>
</comment>
<proteinExistence type="inferred from homology"/>
<reference key="1">
    <citation type="journal article" date="2002" name="Nucleic Acids Res.">
        <title>Genome sequence of Oceanobacillus iheyensis isolated from the Iheya Ridge and its unexpected adaptive capabilities to extreme environments.</title>
        <authorList>
            <person name="Takami H."/>
            <person name="Takaki Y."/>
            <person name="Uchiyama I."/>
        </authorList>
    </citation>
    <scope>NUCLEOTIDE SEQUENCE [LARGE SCALE GENOMIC DNA]</scope>
    <source>
        <strain>DSM 14371 / CIP 107618 / JCM 11309 / KCTC 3954 / HTE831</strain>
    </source>
</reference>
<accession>Q8ENX4</accession>
<keyword id="KW-0274">FAD</keyword>
<keyword id="KW-0285">Flavoprotein</keyword>
<keyword id="KW-0521">NADP</keyword>
<keyword id="KW-0560">Oxidoreductase</keyword>
<keyword id="KW-1185">Reference proteome</keyword>
<gene>
    <name type="ordered locus">OB2351</name>
</gene>
<name>FENR2_OCEIH</name>
<organism>
    <name type="scientific">Oceanobacillus iheyensis (strain DSM 14371 / CIP 107618 / JCM 11309 / KCTC 3954 / HTE831)</name>
    <dbReference type="NCBI Taxonomy" id="221109"/>
    <lineage>
        <taxon>Bacteria</taxon>
        <taxon>Bacillati</taxon>
        <taxon>Bacillota</taxon>
        <taxon>Bacilli</taxon>
        <taxon>Bacillales</taxon>
        <taxon>Bacillaceae</taxon>
        <taxon>Oceanobacillus</taxon>
    </lineage>
</organism>
<protein>
    <recommendedName>
        <fullName evidence="1">Ferredoxin--NADP reductase 2</fullName>
        <shortName evidence="1">FNR 2</shortName>
        <shortName evidence="1">Fd-NADP(+) reductase 2</shortName>
        <ecNumber evidence="1">1.18.1.2</ecNumber>
    </recommendedName>
</protein>